<protein>
    <recommendedName>
        <fullName evidence="1">33 kDa chaperonin</fullName>
    </recommendedName>
    <alternativeName>
        <fullName evidence="1">Heat shock protein 33 homolog</fullName>
        <shortName evidence="1">HSP33</shortName>
    </alternativeName>
</protein>
<sequence>MIYYGTMFDHKVRFSIVRMREVVEEARNRHALSYLATVVLGRALIGAALVTPWLAEKERWTLDIEGNGPIRRVVAQSTSEFTVRGYVANPKVELPLNEKGKFDVAGAIGQGVLRVVRDLGLKTPFVSQVPLVSGEIAEDLAYYFAVSEQIPSAFSIGVLVDSDGVKIAGGFAVQIIDRTLEQEKVEMIEKNIKNLPSISKLFQEAEPLDVLERIFGEKVGFVETAEIKYKCDCNREKAKNALLVLDKKELEDMRKEGKGEVVCKWCNTRYVFSEEELEELLKFKVDDSGS</sequence>
<feature type="chain" id="PRO_0000192220" description="33 kDa chaperonin">
    <location>
        <begin position="1"/>
        <end position="290"/>
    </location>
</feature>
<feature type="disulfide bond" description="Redox-active" evidence="1">
    <location>
        <begin position="231"/>
        <end position="233"/>
    </location>
</feature>
<feature type="disulfide bond" description="Redox-active" evidence="1">
    <location>
        <begin position="263"/>
        <end position="266"/>
    </location>
</feature>
<feature type="strand" evidence="2">
    <location>
        <begin position="1"/>
        <end position="7"/>
    </location>
</feature>
<feature type="turn" evidence="2">
    <location>
        <begin position="8"/>
        <end position="11"/>
    </location>
</feature>
<feature type="strand" evidence="2">
    <location>
        <begin position="12"/>
        <end position="18"/>
    </location>
</feature>
<feature type="helix" evidence="2">
    <location>
        <begin position="20"/>
        <end position="30"/>
    </location>
</feature>
<feature type="helix" evidence="2">
    <location>
        <begin position="34"/>
        <end position="50"/>
    </location>
</feature>
<feature type="helix" evidence="2">
    <location>
        <begin position="51"/>
        <end position="53"/>
    </location>
</feature>
<feature type="strand" evidence="2">
    <location>
        <begin position="59"/>
        <end position="68"/>
    </location>
</feature>
<feature type="strand" evidence="2">
    <location>
        <begin position="72"/>
        <end position="78"/>
    </location>
</feature>
<feature type="strand" evidence="2">
    <location>
        <begin position="81"/>
        <end position="88"/>
    </location>
</feature>
<feature type="helix" evidence="2">
    <location>
        <begin position="104"/>
        <end position="108"/>
    </location>
</feature>
<feature type="strand" evidence="2">
    <location>
        <begin position="110"/>
        <end position="118"/>
    </location>
</feature>
<feature type="strand" evidence="2">
    <location>
        <begin position="120"/>
        <end position="123"/>
    </location>
</feature>
<feature type="strand" evidence="2">
    <location>
        <begin position="125"/>
        <end position="130"/>
    </location>
</feature>
<feature type="strand" evidence="2">
    <location>
        <begin position="132"/>
        <end position="136"/>
    </location>
</feature>
<feature type="helix" evidence="2">
    <location>
        <begin position="137"/>
        <end position="147"/>
    </location>
</feature>
<feature type="strand" evidence="2">
    <location>
        <begin position="152"/>
        <end position="161"/>
    </location>
</feature>
<feature type="strand" evidence="2">
    <location>
        <begin position="164"/>
        <end position="176"/>
    </location>
</feature>
<feature type="helix" evidence="2">
    <location>
        <begin position="182"/>
        <end position="193"/>
    </location>
</feature>
<feature type="helix" evidence="2">
    <location>
        <begin position="198"/>
        <end position="201"/>
    </location>
</feature>
<feature type="turn" evidence="2">
    <location>
        <begin position="202"/>
        <end position="204"/>
    </location>
</feature>
<feature type="helix" evidence="2">
    <location>
        <begin position="207"/>
        <end position="215"/>
    </location>
</feature>
<feature type="strand" evidence="2">
    <location>
        <begin position="223"/>
        <end position="226"/>
    </location>
</feature>
<feature type="helix" evidence="2">
    <location>
        <begin position="235"/>
        <end position="243"/>
    </location>
</feature>
<feature type="helix" evidence="2">
    <location>
        <begin position="247"/>
        <end position="256"/>
    </location>
</feature>
<feature type="strand" evidence="2">
    <location>
        <begin position="259"/>
        <end position="262"/>
    </location>
</feature>
<feature type="turn" evidence="2">
    <location>
        <begin position="264"/>
        <end position="266"/>
    </location>
</feature>
<feature type="strand" evidence="2">
    <location>
        <begin position="269"/>
        <end position="272"/>
    </location>
</feature>
<feature type="helix" evidence="2">
    <location>
        <begin position="274"/>
        <end position="286"/>
    </location>
</feature>
<comment type="function">
    <text evidence="1">Redox regulated molecular chaperone. Protects both thermally unfolding and oxidatively damaged proteins from irreversible aggregation. Plays an important role in the bacterial defense system toward oxidative stress.</text>
</comment>
<comment type="subcellular location">
    <subcellularLocation>
        <location evidence="1">Cytoplasm</location>
    </subcellularLocation>
</comment>
<comment type="PTM">
    <text evidence="1">Under oxidizing conditions two disulfide bonds are formed involving the reactive cysteines. Under reducing conditions zinc is bound to the reactive cysteines and the protein is inactive.</text>
</comment>
<comment type="similarity">
    <text evidence="1">Belongs to the HSP33 family.</text>
</comment>
<dbReference type="EMBL" id="AE000512">
    <property type="protein sequence ID" value="AAD36465.1"/>
    <property type="molecule type" value="Genomic_DNA"/>
</dbReference>
<dbReference type="PIR" id="C72259">
    <property type="entry name" value="C72259"/>
</dbReference>
<dbReference type="RefSeq" id="NP_229195.1">
    <property type="nucleotide sequence ID" value="NC_000853.1"/>
</dbReference>
<dbReference type="RefSeq" id="WP_004081604.1">
    <property type="nucleotide sequence ID" value="NZ_CP011107.1"/>
</dbReference>
<dbReference type="PDB" id="1VQ0">
    <property type="method" value="X-ray"/>
    <property type="resolution" value="2.20 A"/>
    <property type="chains" value="A/B=1-290"/>
</dbReference>
<dbReference type="PDBsum" id="1VQ0"/>
<dbReference type="SMR" id="Q9X1B4"/>
<dbReference type="FunCoup" id="Q9X1B4">
    <property type="interactions" value="106"/>
</dbReference>
<dbReference type="STRING" id="243274.TM_1394"/>
<dbReference type="PaxDb" id="243274-THEMA_07345"/>
<dbReference type="EnsemblBacteria" id="AAD36465">
    <property type="protein sequence ID" value="AAD36465"/>
    <property type="gene ID" value="TM_1394"/>
</dbReference>
<dbReference type="KEGG" id="tma:TM1394"/>
<dbReference type="KEGG" id="tmi:THEMA_07345"/>
<dbReference type="KEGG" id="tmm:Tmari_1401"/>
<dbReference type="KEGG" id="tmw:THMA_1423"/>
<dbReference type="eggNOG" id="COG1281">
    <property type="taxonomic scope" value="Bacteria"/>
</dbReference>
<dbReference type="InParanoid" id="Q9X1B4"/>
<dbReference type="OrthoDB" id="9776534at2"/>
<dbReference type="EvolutionaryTrace" id="Q9X1B4"/>
<dbReference type="Proteomes" id="UP000008183">
    <property type="component" value="Chromosome"/>
</dbReference>
<dbReference type="GO" id="GO:0005737">
    <property type="term" value="C:cytoplasm"/>
    <property type="evidence" value="ECO:0000318"/>
    <property type="project" value="GO_Central"/>
</dbReference>
<dbReference type="GO" id="GO:0044183">
    <property type="term" value="F:protein folding chaperone"/>
    <property type="evidence" value="ECO:0000318"/>
    <property type="project" value="GO_Central"/>
</dbReference>
<dbReference type="GO" id="GO:0051082">
    <property type="term" value="F:unfolded protein binding"/>
    <property type="evidence" value="ECO:0007669"/>
    <property type="project" value="UniProtKB-UniRule"/>
</dbReference>
<dbReference type="GO" id="GO:0042026">
    <property type="term" value="P:protein refolding"/>
    <property type="evidence" value="ECO:0000318"/>
    <property type="project" value="GO_Central"/>
</dbReference>
<dbReference type="CDD" id="cd00498">
    <property type="entry name" value="Hsp33"/>
    <property type="match status" value="1"/>
</dbReference>
<dbReference type="Gene3D" id="3.55.30.10">
    <property type="entry name" value="Hsp33 domain"/>
    <property type="match status" value="1"/>
</dbReference>
<dbReference type="Gene3D" id="3.90.1280.10">
    <property type="entry name" value="HSP33 redox switch-like"/>
    <property type="match status" value="1"/>
</dbReference>
<dbReference type="HAMAP" id="MF_00117">
    <property type="entry name" value="HslO"/>
    <property type="match status" value="1"/>
</dbReference>
<dbReference type="InterPro" id="IPR000397">
    <property type="entry name" value="Heat_shock_Hsp33"/>
</dbReference>
<dbReference type="InterPro" id="IPR016154">
    <property type="entry name" value="Heat_shock_Hsp33_C"/>
</dbReference>
<dbReference type="InterPro" id="IPR016153">
    <property type="entry name" value="Heat_shock_Hsp33_N"/>
</dbReference>
<dbReference type="NCBIfam" id="NF001033">
    <property type="entry name" value="PRK00114.1"/>
    <property type="match status" value="1"/>
</dbReference>
<dbReference type="PANTHER" id="PTHR30111">
    <property type="entry name" value="33 KDA CHAPERONIN"/>
    <property type="match status" value="1"/>
</dbReference>
<dbReference type="PANTHER" id="PTHR30111:SF1">
    <property type="entry name" value="33 KDA CHAPERONIN"/>
    <property type="match status" value="1"/>
</dbReference>
<dbReference type="Pfam" id="PF01430">
    <property type="entry name" value="HSP33"/>
    <property type="match status" value="1"/>
</dbReference>
<dbReference type="PIRSF" id="PIRSF005261">
    <property type="entry name" value="Heat_shock_Hsp33"/>
    <property type="match status" value="1"/>
</dbReference>
<dbReference type="SUPFAM" id="SSF64397">
    <property type="entry name" value="Hsp33 domain"/>
    <property type="match status" value="1"/>
</dbReference>
<dbReference type="SUPFAM" id="SSF118352">
    <property type="entry name" value="HSP33 redox switch-like"/>
    <property type="match status" value="1"/>
</dbReference>
<reference key="1">
    <citation type="journal article" date="1999" name="Nature">
        <title>Evidence for lateral gene transfer between Archaea and Bacteria from genome sequence of Thermotoga maritima.</title>
        <authorList>
            <person name="Nelson K.E."/>
            <person name="Clayton R.A."/>
            <person name="Gill S.R."/>
            <person name="Gwinn M.L."/>
            <person name="Dodson R.J."/>
            <person name="Haft D.H."/>
            <person name="Hickey E.K."/>
            <person name="Peterson J.D."/>
            <person name="Nelson W.C."/>
            <person name="Ketchum K.A."/>
            <person name="McDonald L.A."/>
            <person name="Utterback T.R."/>
            <person name="Malek J.A."/>
            <person name="Linher K.D."/>
            <person name="Garrett M.M."/>
            <person name="Stewart A.M."/>
            <person name="Cotton M.D."/>
            <person name="Pratt M.S."/>
            <person name="Phillips C.A."/>
            <person name="Richardson D.L."/>
            <person name="Heidelberg J.F."/>
            <person name="Sutton G.G."/>
            <person name="Fleischmann R.D."/>
            <person name="Eisen J.A."/>
            <person name="White O."/>
            <person name="Salzberg S.L."/>
            <person name="Smith H.O."/>
            <person name="Venter J.C."/>
            <person name="Fraser C.M."/>
        </authorList>
    </citation>
    <scope>NUCLEOTIDE SEQUENCE [LARGE SCALE GENOMIC DNA]</scope>
    <source>
        <strain>ATCC 43589 / DSM 3109 / JCM 10099 / NBRC 100826 / MSB8</strain>
    </source>
</reference>
<accession>Q9X1B4</accession>
<keyword id="KW-0002">3D-structure</keyword>
<keyword id="KW-0143">Chaperone</keyword>
<keyword id="KW-0963">Cytoplasm</keyword>
<keyword id="KW-1015">Disulfide bond</keyword>
<keyword id="KW-0676">Redox-active center</keyword>
<keyword id="KW-1185">Reference proteome</keyword>
<keyword id="KW-0862">Zinc</keyword>
<evidence type="ECO:0000255" key="1">
    <source>
        <dbReference type="HAMAP-Rule" id="MF_00117"/>
    </source>
</evidence>
<evidence type="ECO:0007829" key="2">
    <source>
        <dbReference type="PDB" id="1VQ0"/>
    </source>
</evidence>
<proteinExistence type="evidence at protein level"/>
<name>HSLO_THEMA</name>
<gene>
    <name evidence="1" type="primary">hslO</name>
    <name type="ordered locus">TM_1394</name>
</gene>
<organism>
    <name type="scientific">Thermotoga maritima (strain ATCC 43589 / DSM 3109 / JCM 10099 / NBRC 100826 / MSB8)</name>
    <dbReference type="NCBI Taxonomy" id="243274"/>
    <lineage>
        <taxon>Bacteria</taxon>
        <taxon>Thermotogati</taxon>
        <taxon>Thermotogota</taxon>
        <taxon>Thermotogae</taxon>
        <taxon>Thermotogales</taxon>
        <taxon>Thermotogaceae</taxon>
        <taxon>Thermotoga</taxon>
    </lineage>
</organism>